<feature type="chain" id="PRO_1000089732" description="Recombination protein RecR">
    <location>
        <begin position="1"/>
        <end position="197"/>
    </location>
</feature>
<feature type="domain" description="Toprim" evidence="1">
    <location>
        <begin position="79"/>
        <end position="174"/>
    </location>
</feature>
<feature type="zinc finger region" description="C4-type" evidence="1">
    <location>
        <begin position="57"/>
        <end position="72"/>
    </location>
</feature>
<comment type="function">
    <text evidence="1">May play a role in DNA repair. It seems to be involved in an RecBC-independent recombinational process of DNA repair. It may act with RecF and RecO.</text>
</comment>
<comment type="similarity">
    <text evidence="1">Belongs to the RecR family.</text>
</comment>
<accession>B3E1K3</accession>
<proteinExistence type="inferred from homology"/>
<name>RECR_TRIL1</name>
<keyword id="KW-0227">DNA damage</keyword>
<keyword id="KW-0233">DNA recombination</keyword>
<keyword id="KW-0234">DNA repair</keyword>
<keyword id="KW-0479">Metal-binding</keyword>
<keyword id="KW-1185">Reference proteome</keyword>
<keyword id="KW-0862">Zinc</keyword>
<keyword id="KW-0863">Zinc-finger</keyword>
<sequence>MLQHAPTLTRLVGELKKLPGIGERTALRLAFHLLKSPQNLGSLAEALTQVQERVCACSVCFALTEQNPCPICSGGRDSSVICVVETSQDMLALERSNAYHGSYHVLQGAISPLHGVNPDDLRIRELLMRIEQGKVEEVVIATNFTVEGETTALYLARQLKPLGIRVTRLAHGIPLGSDIEFVDPATVQWAMKGRSEL</sequence>
<evidence type="ECO:0000255" key="1">
    <source>
        <dbReference type="HAMAP-Rule" id="MF_00017"/>
    </source>
</evidence>
<dbReference type="EMBL" id="CP001089">
    <property type="protein sequence ID" value="ACD94095.1"/>
    <property type="molecule type" value="Genomic_DNA"/>
</dbReference>
<dbReference type="RefSeq" id="WP_012468452.1">
    <property type="nucleotide sequence ID" value="NC_010814.1"/>
</dbReference>
<dbReference type="SMR" id="B3E1K3"/>
<dbReference type="STRING" id="398767.Glov_0367"/>
<dbReference type="KEGG" id="glo:Glov_0367"/>
<dbReference type="eggNOG" id="COG0353">
    <property type="taxonomic scope" value="Bacteria"/>
</dbReference>
<dbReference type="HOGENOM" id="CLU_060739_1_0_7"/>
<dbReference type="OrthoDB" id="9802672at2"/>
<dbReference type="Proteomes" id="UP000002420">
    <property type="component" value="Chromosome"/>
</dbReference>
<dbReference type="GO" id="GO:0003677">
    <property type="term" value="F:DNA binding"/>
    <property type="evidence" value="ECO:0007669"/>
    <property type="project" value="UniProtKB-UniRule"/>
</dbReference>
<dbReference type="GO" id="GO:0008270">
    <property type="term" value="F:zinc ion binding"/>
    <property type="evidence" value="ECO:0007669"/>
    <property type="project" value="UniProtKB-KW"/>
</dbReference>
<dbReference type="GO" id="GO:0006310">
    <property type="term" value="P:DNA recombination"/>
    <property type="evidence" value="ECO:0007669"/>
    <property type="project" value="UniProtKB-UniRule"/>
</dbReference>
<dbReference type="GO" id="GO:0006281">
    <property type="term" value="P:DNA repair"/>
    <property type="evidence" value="ECO:0007669"/>
    <property type="project" value="UniProtKB-UniRule"/>
</dbReference>
<dbReference type="CDD" id="cd01025">
    <property type="entry name" value="TOPRIM_recR"/>
    <property type="match status" value="1"/>
</dbReference>
<dbReference type="Gene3D" id="3.30.60.80">
    <property type="match status" value="1"/>
</dbReference>
<dbReference type="Gene3D" id="3.40.1360.10">
    <property type="match status" value="1"/>
</dbReference>
<dbReference type="Gene3D" id="6.10.250.240">
    <property type="match status" value="1"/>
</dbReference>
<dbReference type="Gene3D" id="1.10.8.420">
    <property type="entry name" value="RecR Domain 1"/>
    <property type="match status" value="1"/>
</dbReference>
<dbReference type="HAMAP" id="MF_00017">
    <property type="entry name" value="RecR"/>
    <property type="match status" value="1"/>
</dbReference>
<dbReference type="InterPro" id="IPR000093">
    <property type="entry name" value="DNA_Rcmb_RecR"/>
</dbReference>
<dbReference type="InterPro" id="IPR023627">
    <property type="entry name" value="Rcmb_RecR"/>
</dbReference>
<dbReference type="InterPro" id="IPR015967">
    <property type="entry name" value="Rcmb_RecR_Znf"/>
</dbReference>
<dbReference type="InterPro" id="IPR006171">
    <property type="entry name" value="TOPRIM_dom"/>
</dbReference>
<dbReference type="InterPro" id="IPR034137">
    <property type="entry name" value="TOPRIM_RecR"/>
</dbReference>
<dbReference type="NCBIfam" id="TIGR00615">
    <property type="entry name" value="recR"/>
    <property type="match status" value="1"/>
</dbReference>
<dbReference type="PANTHER" id="PTHR30446">
    <property type="entry name" value="RECOMBINATION PROTEIN RECR"/>
    <property type="match status" value="1"/>
</dbReference>
<dbReference type="PANTHER" id="PTHR30446:SF0">
    <property type="entry name" value="RECOMBINATION PROTEIN RECR"/>
    <property type="match status" value="1"/>
</dbReference>
<dbReference type="Pfam" id="PF21175">
    <property type="entry name" value="RecR_C"/>
    <property type="match status" value="1"/>
</dbReference>
<dbReference type="Pfam" id="PF21176">
    <property type="entry name" value="RecR_HhH"/>
    <property type="match status" value="1"/>
</dbReference>
<dbReference type="Pfam" id="PF02132">
    <property type="entry name" value="RecR_ZnF"/>
    <property type="match status" value="1"/>
</dbReference>
<dbReference type="Pfam" id="PF13662">
    <property type="entry name" value="Toprim_4"/>
    <property type="match status" value="1"/>
</dbReference>
<dbReference type="SMART" id="SM00493">
    <property type="entry name" value="TOPRIM"/>
    <property type="match status" value="1"/>
</dbReference>
<dbReference type="SUPFAM" id="SSF111304">
    <property type="entry name" value="Recombination protein RecR"/>
    <property type="match status" value="1"/>
</dbReference>
<dbReference type="PROSITE" id="PS01300">
    <property type="entry name" value="RECR"/>
    <property type="match status" value="1"/>
</dbReference>
<dbReference type="PROSITE" id="PS50880">
    <property type="entry name" value="TOPRIM"/>
    <property type="match status" value="1"/>
</dbReference>
<reference key="1">
    <citation type="submission" date="2008-05" db="EMBL/GenBank/DDBJ databases">
        <title>Complete sequence of chromosome of Geobacter lovleyi SZ.</title>
        <authorList>
            <consortium name="US DOE Joint Genome Institute"/>
            <person name="Lucas S."/>
            <person name="Copeland A."/>
            <person name="Lapidus A."/>
            <person name="Glavina del Rio T."/>
            <person name="Dalin E."/>
            <person name="Tice H."/>
            <person name="Bruce D."/>
            <person name="Goodwin L."/>
            <person name="Pitluck S."/>
            <person name="Chertkov O."/>
            <person name="Meincke L."/>
            <person name="Brettin T."/>
            <person name="Detter J.C."/>
            <person name="Han C."/>
            <person name="Tapia R."/>
            <person name="Kuske C.R."/>
            <person name="Schmutz J."/>
            <person name="Larimer F."/>
            <person name="Land M."/>
            <person name="Hauser L."/>
            <person name="Kyrpides N."/>
            <person name="Mikhailova N."/>
            <person name="Sung Y."/>
            <person name="Fletcher K.E."/>
            <person name="Ritalahti K.M."/>
            <person name="Loeffler F.E."/>
            <person name="Richardson P."/>
        </authorList>
    </citation>
    <scope>NUCLEOTIDE SEQUENCE [LARGE SCALE GENOMIC DNA]</scope>
    <source>
        <strain>ATCC BAA-1151 / DSM 17278 / SZ</strain>
    </source>
</reference>
<protein>
    <recommendedName>
        <fullName evidence="1">Recombination protein RecR</fullName>
    </recommendedName>
</protein>
<organism>
    <name type="scientific">Trichlorobacter lovleyi (strain ATCC BAA-1151 / DSM 17278 / SZ)</name>
    <name type="common">Geobacter lovleyi</name>
    <dbReference type="NCBI Taxonomy" id="398767"/>
    <lineage>
        <taxon>Bacteria</taxon>
        <taxon>Pseudomonadati</taxon>
        <taxon>Thermodesulfobacteriota</taxon>
        <taxon>Desulfuromonadia</taxon>
        <taxon>Geobacterales</taxon>
        <taxon>Geobacteraceae</taxon>
        <taxon>Trichlorobacter</taxon>
    </lineage>
</organism>
<gene>
    <name evidence="1" type="primary">recR</name>
    <name type="ordered locus">Glov_0367</name>
</gene>